<evidence type="ECO:0000256" key="1">
    <source>
        <dbReference type="SAM" id="MobiDB-lite"/>
    </source>
</evidence>
<evidence type="ECO:0000269" key="2">
    <source>
    </source>
</evidence>
<evidence type="ECO:0000305" key="3"/>
<protein>
    <recommendedName>
        <fullName>Histone H3.4</fullName>
    </recommendedName>
    <alternativeName>
        <fullName>Minor histone H3 variant</fullName>
    </alternativeName>
</protein>
<accession>Q22RG7</accession>
<comment type="function">
    <text evidence="2">Macronuclear replacement variant which replaces conventional H3 in a subset of nucleosomes. Nucleosomes wrap and compact DNA into chromatin, limiting DNA accessibility to the cellular machineries which require DNA as a template. Histones thereby play a central role in transcription regulation, DNA repair, DNA replication and chromosomal stability. DNA accessibility is regulated via a complex set of post-translational modifications of histones, also called histone code, and nucleosome remodeling. Functions redundantly to H3.3. H3.4 deposition is mainly transcription-associated, DNA replication-independent. Although not essential for vegetative growth, minor H3 variants are required for producing viable conjugation progeny by affecting late developmental stages of conjugation.</text>
</comment>
<comment type="subunit">
    <text>The nucleosome is a histone octamer containing two molecules each of H2A, H2B, H3 and H4 assembled in one H3-H4 heterotetramer and two H2A-H2B heterodimers. The octamer wraps approximately 147 bp of DNA.</text>
</comment>
<comment type="subcellular location">
    <subcellularLocation>
        <location evidence="2">Nucleus</location>
    </subcellularLocation>
    <subcellularLocation>
        <location evidence="2">Chromosome</location>
    </subcellularLocation>
    <text>Localizes mainly to the large, transcriptionally active, somatic macronucleus (MAC) and only faintly to the small, transcriptionally inert, germ line micronucleus (MIC).</text>
</comment>
<comment type="induction">
    <text evidence="2">Up-regulated in the absence of H3.3.</text>
</comment>
<comment type="similarity">
    <text evidence="3">Belongs to the histone H3 family.</text>
</comment>
<dbReference type="EMBL" id="GG662845">
    <property type="protein sequence ID" value="EAR88155.1"/>
    <property type="molecule type" value="Genomic_DNA"/>
</dbReference>
<dbReference type="RefSeq" id="XP_001008400.1">
    <property type="nucleotide sequence ID" value="XM_001008400.1"/>
</dbReference>
<dbReference type="SMR" id="Q22RG7"/>
<dbReference type="FunCoup" id="Q22RG7">
    <property type="interactions" value="270"/>
</dbReference>
<dbReference type="STRING" id="312017.Q22RG7"/>
<dbReference type="EnsemblProtists" id="EAR88155">
    <property type="protein sequence ID" value="EAR88155"/>
    <property type="gene ID" value="TTHERM_00016200"/>
</dbReference>
<dbReference type="GeneID" id="7826848"/>
<dbReference type="KEGG" id="tet:TTHERM_00016200"/>
<dbReference type="eggNOG" id="KOG1745">
    <property type="taxonomic scope" value="Eukaryota"/>
</dbReference>
<dbReference type="HOGENOM" id="CLU_078295_4_0_1"/>
<dbReference type="InParanoid" id="Q22RG7"/>
<dbReference type="OMA" id="MLNSEYT"/>
<dbReference type="OrthoDB" id="428318at2759"/>
<dbReference type="Proteomes" id="UP000009168">
    <property type="component" value="Unassembled WGS sequence"/>
</dbReference>
<dbReference type="GO" id="GO:0000786">
    <property type="term" value="C:nucleosome"/>
    <property type="evidence" value="ECO:0007669"/>
    <property type="project" value="UniProtKB-KW"/>
</dbReference>
<dbReference type="GO" id="GO:0005634">
    <property type="term" value="C:nucleus"/>
    <property type="evidence" value="ECO:0007669"/>
    <property type="project" value="UniProtKB-SubCell"/>
</dbReference>
<dbReference type="GO" id="GO:0003677">
    <property type="term" value="F:DNA binding"/>
    <property type="evidence" value="ECO:0007669"/>
    <property type="project" value="UniProtKB-KW"/>
</dbReference>
<dbReference type="GO" id="GO:0046982">
    <property type="term" value="F:protein heterodimerization activity"/>
    <property type="evidence" value="ECO:0007669"/>
    <property type="project" value="InterPro"/>
</dbReference>
<dbReference type="GO" id="GO:0030527">
    <property type="term" value="F:structural constituent of chromatin"/>
    <property type="evidence" value="ECO:0007669"/>
    <property type="project" value="InterPro"/>
</dbReference>
<dbReference type="CDD" id="cd22911">
    <property type="entry name" value="HFD_H3"/>
    <property type="match status" value="1"/>
</dbReference>
<dbReference type="FunFam" id="1.10.20.10:FF:000001">
    <property type="entry name" value="Histone H3"/>
    <property type="match status" value="1"/>
</dbReference>
<dbReference type="Gene3D" id="1.10.20.10">
    <property type="entry name" value="Histone, subunit A"/>
    <property type="match status" value="1"/>
</dbReference>
<dbReference type="InterPro" id="IPR009072">
    <property type="entry name" value="Histone-fold"/>
</dbReference>
<dbReference type="InterPro" id="IPR007125">
    <property type="entry name" value="Histone_H2A/H2B/H3"/>
</dbReference>
<dbReference type="InterPro" id="IPR000164">
    <property type="entry name" value="Histone_H3/CENP-A"/>
</dbReference>
<dbReference type="PANTHER" id="PTHR11426">
    <property type="entry name" value="HISTONE H3"/>
    <property type="match status" value="1"/>
</dbReference>
<dbReference type="Pfam" id="PF00125">
    <property type="entry name" value="Histone"/>
    <property type="match status" value="1"/>
</dbReference>
<dbReference type="PRINTS" id="PR00622">
    <property type="entry name" value="HISTONEH3"/>
</dbReference>
<dbReference type="SMART" id="SM00428">
    <property type="entry name" value="H3"/>
    <property type="match status" value="1"/>
</dbReference>
<dbReference type="SUPFAM" id="SSF47113">
    <property type="entry name" value="Histone-fold"/>
    <property type="match status" value="1"/>
</dbReference>
<dbReference type="PROSITE" id="PS00322">
    <property type="entry name" value="HISTONE_H3_1"/>
    <property type="match status" value="1"/>
</dbReference>
<dbReference type="PROSITE" id="PS00959">
    <property type="entry name" value="HISTONE_H3_2"/>
    <property type="match status" value="1"/>
</dbReference>
<gene>
    <name type="primary">HHT4</name>
    <name type="ORF">TTHERM_00016200</name>
</gene>
<feature type="chain" id="PRO_0000385012" description="Histone H3.4">
    <location>
        <begin position="1"/>
        <end position="136"/>
    </location>
</feature>
<feature type="region of interest" description="Disordered" evidence="1">
    <location>
        <begin position="1"/>
        <end position="41"/>
    </location>
</feature>
<reference key="1">
    <citation type="journal article" date="2006" name="PLoS Biol.">
        <title>Macronuclear genome sequence of the ciliate Tetrahymena thermophila, a model eukaryote.</title>
        <authorList>
            <person name="Eisen J.A."/>
            <person name="Coyne R.S."/>
            <person name="Wu M."/>
            <person name="Wu D."/>
            <person name="Thiagarajan M."/>
            <person name="Wortman J.R."/>
            <person name="Badger J.H."/>
            <person name="Ren Q."/>
            <person name="Amedeo P."/>
            <person name="Jones K.M."/>
            <person name="Tallon L.J."/>
            <person name="Delcher A.L."/>
            <person name="Salzberg S.L."/>
            <person name="Silva J.C."/>
            <person name="Haas B.J."/>
            <person name="Majoros W.H."/>
            <person name="Farzad M."/>
            <person name="Carlton J.M."/>
            <person name="Smith R.K. Jr."/>
            <person name="Garg J."/>
            <person name="Pearlman R.E."/>
            <person name="Karrer K.M."/>
            <person name="Sun L."/>
            <person name="Manning G."/>
            <person name="Elde N.C."/>
            <person name="Turkewitz A.P."/>
            <person name="Asai D.J."/>
            <person name="Wilkes D.E."/>
            <person name="Wang Y."/>
            <person name="Cai H."/>
            <person name="Collins K."/>
            <person name="Stewart B.A."/>
            <person name="Lee S.R."/>
            <person name="Wilamowska K."/>
            <person name="Weinberg Z."/>
            <person name="Ruzzo W.L."/>
            <person name="Wloga D."/>
            <person name="Gaertig J."/>
            <person name="Frankel J."/>
            <person name="Tsao C.-C."/>
            <person name="Gorovsky M.A."/>
            <person name="Keeling P.J."/>
            <person name="Waller R.F."/>
            <person name="Patron N.J."/>
            <person name="Cherry J.M."/>
            <person name="Stover N.A."/>
            <person name="Krieger C.J."/>
            <person name="del Toro C."/>
            <person name="Ryder H.F."/>
            <person name="Williamson S.C."/>
            <person name="Barbeau R.A."/>
            <person name="Hamilton E.P."/>
            <person name="Orias E."/>
        </authorList>
    </citation>
    <scope>NUCLEOTIDE SEQUENCE [LARGE SCALE GENOMIC DNA]</scope>
    <source>
        <strain>SB210</strain>
    </source>
</reference>
<reference key="2">
    <citation type="journal article" date="2006" name="Mol. Cell. Biol.">
        <title>Deposition and function of histone H3 variants in Tetrahymena thermophila.</title>
        <authorList>
            <person name="Cui B."/>
            <person name="Liu Y."/>
            <person name="Gorovsky M.A."/>
        </authorList>
    </citation>
    <scope>FUNCTION</scope>
    <scope>INDUCTION</scope>
    <scope>SUBCELLULAR LOCATION</scope>
    <source>
        <strain>B2086</strain>
        <strain>CU428</strain>
    </source>
</reference>
<sequence length="136" mass="15525">MARTKQTARKSTSIKAPRKQLAAKAARKSAPISGGIKKPHKFRPGTVALREIRKYQKTTDLLIRKLPFQRLVRDIAMEMKSDIRFQSQAILALQEAAEAYLVGLFEDTNLCAIHARRVTIMTKDLHLARRIRGERF</sequence>
<organism>
    <name type="scientific">Tetrahymena thermophila (strain SB210)</name>
    <dbReference type="NCBI Taxonomy" id="312017"/>
    <lineage>
        <taxon>Eukaryota</taxon>
        <taxon>Sar</taxon>
        <taxon>Alveolata</taxon>
        <taxon>Ciliophora</taxon>
        <taxon>Intramacronucleata</taxon>
        <taxon>Oligohymenophorea</taxon>
        <taxon>Hymenostomatida</taxon>
        <taxon>Tetrahymenina</taxon>
        <taxon>Tetrahymenidae</taxon>
        <taxon>Tetrahymena</taxon>
    </lineage>
</organism>
<name>H34_TETTS</name>
<proteinExistence type="evidence at transcript level"/>
<keyword id="KW-0158">Chromosome</keyword>
<keyword id="KW-0238">DNA-binding</keyword>
<keyword id="KW-0544">Nucleosome core</keyword>
<keyword id="KW-0539">Nucleus</keyword>
<keyword id="KW-1185">Reference proteome</keyword>